<comment type="function">
    <text evidence="1">The UvrABC repair system catalyzes the recognition and processing of DNA lesions. UvrA is an ATPase and a DNA-binding protein. A damage recognition complex composed of 2 UvrA and 2 UvrB subunits scans DNA for abnormalities. When the presence of a lesion has been verified by UvrB, the UvrA molecules dissociate.</text>
</comment>
<comment type="subunit">
    <text evidence="1">Forms a heterotetramer with UvrB during the search for lesions.</text>
</comment>
<comment type="subcellular location">
    <subcellularLocation>
        <location evidence="1">Cytoplasm</location>
    </subcellularLocation>
</comment>
<comment type="similarity">
    <text evidence="1">Belongs to the ABC transporter superfamily. UvrA family.</text>
</comment>
<accession>P63383</accession>
<accession>Q99VL6</accession>
<keyword id="KW-0067">ATP-binding</keyword>
<keyword id="KW-0963">Cytoplasm</keyword>
<keyword id="KW-0227">DNA damage</keyword>
<keyword id="KW-0228">DNA excision</keyword>
<keyword id="KW-0234">DNA repair</keyword>
<keyword id="KW-0238">DNA-binding</keyword>
<keyword id="KW-0267">Excision nuclease</keyword>
<keyword id="KW-0479">Metal-binding</keyword>
<keyword id="KW-0547">Nucleotide-binding</keyword>
<keyword id="KW-0677">Repeat</keyword>
<keyword id="KW-0742">SOS response</keyword>
<keyword id="KW-0862">Zinc</keyword>
<keyword id="KW-0863">Zinc-finger</keyword>
<gene>
    <name evidence="1" type="primary">uvrA</name>
    <name type="ordered locus">SA0714</name>
</gene>
<evidence type="ECO:0000255" key="1">
    <source>
        <dbReference type="HAMAP-Rule" id="MF_00205"/>
    </source>
</evidence>
<reference key="1">
    <citation type="journal article" date="2001" name="Lancet">
        <title>Whole genome sequencing of meticillin-resistant Staphylococcus aureus.</title>
        <authorList>
            <person name="Kuroda M."/>
            <person name="Ohta T."/>
            <person name="Uchiyama I."/>
            <person name="Baba T."/>
            <person name="Yuzawa H."/>
            <person name="Kobayashi I."/>
            <person name="Cui L."/>
            <person name="Oguchi A."/>
            <person name="Aoki K."/>
            <person name="Nagai Y."/>
            <person name="Lian J.-Q."/>
            <person name="Ito T."/>
            <person name="Kanamori M."/>
            <person name="Matsumaru H."/>
            <person name="Maruyama A."/>
            <person name="Murakami H."/>
            <person name="Hosoyama A."/>
            <person name="Mizutani-Ui Y."/>
            <person name="Takahashi N.K."/>
            <person name="Sawano T."/>
            <person name="Inoue R."/>
            <person name="Kaito C."/>
            <person name="Sekimizu K."/>
            <person name="Hirakawa H."/>
            <person name="Kuhara S."/>
            <person name="Goto S."/>
            <person name="Yabuzaki J."/>
            <person name="Kanehisa M."/>
            <person name="Yamashita A."/>
            <person name="Oshima K."/>
            <person name="Furuya K."/>
            <person name="Yoshino C."/>
            <person name="Shiba T."/>
            <person name="Hattori M."/>
            <person name="Ogasawara N."/>
            <person name="Hayashi H."/>
            <person name="Hiramatsu K."/>
        </authorList>
    </citation>
    <scope>NUCLEOTIDE SEQUENCE [LARGE SCALE GENOMIC DNA]</scope>
    <source>
        <strain>N315</strain>
    </source>
</reference>
<reference key="2">
    <citation type="submission" date="2007-10" db="UniProtKB">
        <title>Shotgun proteomic analysis of total and membrane protein extracts of S. aureus strain N315.</title>
        <authorList>
            <person name="Vaezzadeh A.R."/>
            <person name="Deshusses J."/>
            <person name="Lescuyer P."/>
            <person name="Hochstrasser D.F."/>
        </authorList>
    </citation>
    <scope>IDENTIFICATION BY MASS SPECTROMETRY [LARGE SCALE ANALYSIS]</scope>
    <source>
        <strain>N315</strain>
    </source>
</reference>
<proteinExistence type="evidence at protein level"/>
<dbReference type="EMBL" id="BA000018">
    <property type="protein sequence ID" value="BAB41947.1"/>
    <property type="molecule type" value="Genomic_DNA"/>
</dbReference>
<dbReference type="PIR" id="H89848">
    <property type="entry name" value="H89848"/>
</dbReference>
<dbReference type="RefSeq" id="WP_000662676.1">
    <property type="nucleotide sequence ID" value="NC_002745.2"/>
</dbReference>
<dbReference type="SMR" id="P63383"/>
<dbReference type="EnsemblBacteria" id="BAB41947">
    <property type="protein sequence ID" value="BAB41947"/>
    <property type="gene ID" value="BAB41947"/>
</dbReference>
<dbReference type="KEGG" id="sau:SA0714"/>
<dbReference type="HOGENOM" id="CLU_001370_0_2_9"/>
<dbReference type="GO" id="GO:0005737">
    <property type="term" value="C:cytoplasm"/>
    <property type="evidence" value="ECO:0007669"/>
    <property type="project" value="UniProtKB-SubCell"/>
</dbReference>
<dbReference type="GO" id="GO:0009380">
    <property type="term" value="C:excinuclease repair complex"/>
    <property type="evidence" value="ECO:0007669"/>
    <property type="project" value="InterPro"/>
</dbReference>
<dbReference type="GO" id="GO:0005524">
    <property type="term" value="F:ATP binding"/>
    <property type="evidence" value="ECO:0007669"/>
    <property type="project" value="UniProtKB-UniRule"/>
</dbReference>
<dbReference type="GO" id="GO:0016887">
    <property type="term" value="F:ATP hydrolysis activity"/>
    <property type="evidence" value="ECO:0007669"/>
    <property type="project" value="InterPro"/>
</dbReference>
<dbReference type="GO" id="GO:0003677">
    <property type="term" value="F:DNA binding"/>
    <property type="evidence" value="ECO:0007669"/>
    <property type="project" value="UniProtKB-UniRule"/>
</dbReference>
<dbReference type="GO" id="GO:0009381">
    <property type="term" value="F:excinuclease ABC activity"/>
    <property type="evidence" value="ECO:0007669"/>
    <property type="project" value="UniProtKB-UniRule"/>
</dbReference>
<dbReference type="GO" id="GO:0008270">
    <property type="term" value="F:zinc ion binding"/>
    <property type="evidence" value="ECO:0007669"/>
    <property type="project" value="UniProtKB-UniRule"/>
</dbReference>
<dbReference type="GO" id="GO:0006289">
    <property type="term" value="P:nucleotide-excision repair"/>
    <property type="evidence" value="ECO:0007669"/>
    <property type="project" value="UniProtKB-UniRule"/>
</dbReference>
<dbReference type="GO" id="GO:0009432">
    <property type="term" value="P:SOS response"/>
    <property type="evidence" value="ECO:0007669"/>
    <property type="project" value="UniProtKB-UniRule"/>
</dbReference>
<dbReference type="CDD" id="cd03270">
    <property type="entry name" value="ABC_UvrA_I"/>
    <property type="match status" value="1"/>
</dbReference>
<dbReference type="CDD" id="cd03271">
    <property type="entry name" value="ABC_UvrA_II"/>
    <property type="match status" value="1"/>
</dbReference>
<dbReference type="FunFam" id="1.20.1580.10:FF:000002">
    <property type="entry name" value="UvrABC system protein A"/>
    <property type="match status" value="1"/>
</dbReference>
<dbReference type="FunFam" id="3.40.50.300:FF:000028">
    <property type="entry name" value="UvrABC system protein A"/>
    <property type="match status" value="1"/>
</dbReference>
<dbReference type="Gene3D" id="3.30.190.20">
    <property type="match status" value="1"/>
</dbReference>
<dbReference type="Gene3D" id="1.10.8.280">
    <property type="entry name" value="ABC transporter ATPase domain-like"/>
    <property type="match status" value="1"/>
</dbReference>
<dbReference type="Gene3D" id="1.20.1580.10">
    <property type="entry name" value="ABC transporter ATPase like domain"/>
    <property type="match status" value="3"/>
</dbReference>
<dbReference type="Gene3D" id="3.40.50.300">
    <property type="entry name" value="P-loop containing nucleotide triphosphate hydrolases"/>
    <property type="match status" value="3"/>
</dbReference>
<dbReference type="HAMAP" id="MF_00205">
    <property type="entry name" value="UvrA"/>
    <property type="match status" value="1"/>
</dbReference>
<dbReference type="InterPro" id="IPR003439">
    <property type="entry name" value="ABC_transporter-like_ATP-bd"/>
</dbReference>
<dbReference type="InterPro" id="IPR017871">
    <property type="entry name" value="ABC_transporter-like_CS"/>
</dbReference>
<dbReference type="InterPro" id="IPR027417">
    <property type="entry name" value="P-loop_NTPase"/>
</dbReference>
<dbReference type="InterPro" id="IPR004602">
    <property type="entry name" value="UvrA"/>
</dbReference>
<dbReference type="InterPro" id="IPR041552">
    <property type="entry name" value="UvrA_DNA-bd"/>
</dbReference>
<dbReference type="InterPro" id="IPR041102">
    <property type="entry name" value="UvrA_inter"/>
</dbReference>
<dbReference type="NCBIfam" id="NF001503">
    <property type="entry name" value="PRK00349.1"/>
    <property type="match status" value="1"/>
</dbReference>
<dbReference type="NCBIfam" id="TIGR00630">
    <property type="entry name" value="uvra"/>
    <property type="match status" value="1"/>
</dbReference>
<dbReference type="PANTHER" id="PTHR43152">
    <property type="entry name" value="UVRABC SYSTEM PROTEIN A"/>
    <property type="match status" value="1"/>
</dbReference>
<dbReference type="PANTHER" id="PTHR43152:SF3">
    <property type="entry name" value="UVRABC SYSTEM PROTEIN A"/>
    <property type="match status" value="1"/>
</dbReference>
<dbReference type="Pfam" id="PF17755">
    <property type="entry name" value="UvrA_DNA-bind"/>
    <property type="match status" value="1"/>
</dbReference>
<dbReference type="Pfam" id="PF17760">
    <property type="entry name" value="UvrA_inter"/>
    <property type="match status" value="1"/>
</dbReference>
<dbReference type="SUPFAM" id="SSF52540">
    <property type="entry name" value="P-loop containing nucleoside triphosphate hydrolases"/>
    <property type="match status" value="2"/>
</dbReference>
<dbReference type="PROSITE" id="PS00211">
    <property type="entry name" value="ABC_TRANSPORTER_1"/>
    <property type="match status" value="2"/>
</dbReference>
<dbReference type="PROSITE" id="PS50893">
    <property type="entry name" value="ABC_TRANSPORTER_2"/>
    <property type="match status" value="1"/>
</dbReference>
<sequence length="948" mass="105384">MKEPSIVVKGARAHNLKDIDIELPKNKLIVMTGLSGSGKSSLAFDTIYAEGQRRYVESLSAYARQFLGQMDKPDVDTIEGLSPAISIDQKTTSKNPRSTVATVTEIYDYIRLLYARVGKPYCPNHNIEIESQTVQQMVDRIMELEARTKIQLLAPVIAHRKGSHEKLIEDIGKKGYVRLRIDGEIVDVNDVPTLDKNKNHTIEVVVDRLVVKDGIETRLADSIETALELSEGQLTVDVIDGEDLKFSESHACPICGFSIGELEPRMFSFNSPFGACPTCDGLGQKLTVDVDLVVPDKDKTLNEGAIEPWIPTSSDFYPTLLKRVCEVYKINMDKPFKKLTERQRDILLYGSGDKEIEFTFTQRQGGTRKRTMVFEGVVPNISRRFHESPSEYTREMMSKYMTELPCETCHGKRLSREALSVYVGGLNIGEVVEYSISQALNYYKNIDLSEQDQAIANQILKEIISRLTFLNNVGLEYLTLNRASGTLSGGEAQRIRLATQIGSRLTGVLYVLDEPSIGLHQRDNDRLINTLKEMRDLGNTLIVVEHDDDTMRAADYLVDIGPGAGEHGGQIVSSGTPQKVMKDKKSLTGQYLSGKKRIDVPEYRRPASDRKISIRGARSNNLKGIDVDIPLSIMTVVTGVSGSGKSSLVNEVLYKSLAQKINKSKVKPGLYDKIEGIDQLDKIIDIDQSPIGRTPRSNPATYTGVFDDIRDVFAQTNEAKIRGYQKGRFSFNVKGGRCEACKGDGIIKIEMHFLPDVYVPCEVCDGKRYNRETLEVTYKGKNIADILEMTVEEATQFFENIPKIKRKLQTLVDVGLGYVTLGQQATTLSGGEAQRVKLASELHKRSTGKSIYILDELTTGLHVDDISRLLKVLNRLVENGDTVVIIEHNLDVIKTADYIIDLGPEGGSGGGTIVATGTPEDIAQTKSSYTGKYLKEVLERDKQNTEDK</sequence>
<name>UVRA_STAAN</name>
<organism>
    <name type="scientific">Staphylococcus aureus (strain N315)</name>
    <dbReference type="NCBI Taxonomy" id="158879"/>
    <lineage>
        <taxon>Bacteria</taxon>
        <taxon>Bacillati</taxon>
        <taxon>Bacillota</taxon>
        <taxon>Bacilli</taxon>
        <taxon>Bacillales</taxon>
        <taxon>Staphylococcaceae</taxon>
        <taxon>Staphylococcus</taxon>
    </lineage>
</organism>
<protein>
    <recommendedName>
        <fullName evidence="1">UvrABC system protein A</fullName>
        <shortName evidence="1">UvrA protein</shortName>
    </recommendedName>
    <alternativeName>
        <fullName evidence="1">Excinuclease ABC subunit A</fullName>
    </alternativeName>
</protein>
<feature type="chain" id="PRO_0000093091" description="UvrABC system protein A">
    <location>
        <begin position="1"/>
        <end position="948"/>
    </location>
</feature>
<feature type="domain" description="ABC transporter 1" evidence="1">
    <location>
        <begin position="309"/>
        <end position="587"/>
    </location>
</feature>
<feature type="domain" description="ABC transporter 2" evidence="1">
    <location>
        <begin position="607"/>
        <end position="935"/>
    </location>
</feature>
<feature type="zinc finger region" description="C4-type" evidence="1">
    <location>
        <begin position="252"/>
        <end position="279"/>
    </location>
</feature>
<feature type="zinc finger region" description="C4-type" evidence="1">
    <location>
        <begin position="738"/>
        <end position="764"/>
    </location>
</feature>
<feature type="binding site" evidence="1">
    <location>
        <begin position="33"/>
        <end position="40"/>
    </location>
    <ligand>
        <name>ATP</name>
        <dbReference type="ChEBI" id="CHEBI:30616"/>
    </ligand>
</feature>
<feature type="binding site" evidence="1">
    <location>
        <begin position="639"/>
        <end position="646"/>
    </location>
    <ligand>
        <name>ATP</name>
        <dbReference type="ChEBI" id="CHEBI:30616"/>
    </ligand>
</feature>